<name>RL361_SALCH</name>
<feature type="chain" id="PRO_0000344715" description="Large ribosomal subunit protein bL36A">
    <location>
        <begin position="1"/>
        <end position="38"/>
    </location>
</feature>
<comment type="similarity">
    <text evidence="1">Belongs to the bacterial ribosomal protein bL36 family.</text>
</comment>
<keyword id="KW-0687">Ribonucleoprotein</keyword>
<keyword id="KW-0689">Ribosomal protein</keyword>
<organism>
    <name type="scientific">Salmonella choleraesuis (strain SC-B67)</name>
    <dbReference type="NCBI Taxonomy" id="321314"/>
    <lineage>
        <taxon>Bacteria</taxon>
        <taxon>Pseudomonadati</taxon>
        <taxon>Pseudomonadota</taxon>
        <taxon>Gammaproteobacteria</taxon>
        <taxon>Enterobacterales</taxon>
        <taxon>Enterobacteriaceae</taxon>
        <taxon>Salmonella</taxon>
    </lineage>
</organism>
<accession>Q57J53</accession>
<protein>
    <recommendedName>
        <fullName evidence="1">Large ribosomal subunit protein bL36A</fullName>
    </recommendedName>
    <alternativeName>
        <fullName evidence="2">50S ribosomal protein L36 1</fullName>
    </alternativeName>
</protein>
<gene>
    <name evidence="1" type="primary">rpmJ1</name>
    <name type="ordered locus">SCH_3353</name>
</gene>
<proteinExistence type="inferred from homology"/>
<reference key="1">
    <citation type="journal article" date="2005" name="Nucleic Acids Res.">
        <title>The genome sequence of Salmonella enterica serovar Choleraesuis, a highly invasive and resistant zoonotic pathogen.</title>
        <authorList>
            <person name="Chiu C.-H."/>
            <person name="Tang P."/>
            <person name="Chu C."/>
            <person name="Hu S."/>
            <person name="Bao Q."/>
            <person name="Yu J."/>
            <person name="Chou Y.-Y."/>
            <person name="Wang H.-S."/>
            <person name="Lee Y.-S."/>
        </authorList>
    </citation>
    <scope>NUCLEOTIDE SEQUENCE [LARGE SCALE GENOMIC DNA]</scope>
    <source>
        <strain>SC-B67</strain>
    </source>
</reference>
<dbReference type="EMBL" id="AE017220">
    <property type="protein sequence ID" value="AAX67259.1"/>
    <property type="molecule type" value="Genomic_DNA"/>
</dbReference>
<dbReference type="SMR" id="Q57J53"/>
<dbReference type="KEGG" id="sec:SCH_3353"/>
<dbReference type="HOGENOM" id="CLU_135723_6_2_6"/>
<dbReference type="Proteomes" id="UP000000538">
    <property type="component" value="Chromosome"/>
</dbReference>
<dbReference type="GO" id="GO:0005737">
    <property type="term" value="C:cytoplasm"/>
    <property type="evidence" value="ECO:0007669"/>
    <property type="project" value="UniProtKB-ARBA"/>
</dbReference>
<dbReference type="GO" id="GO:1990904">
    <property type="term" value="C:ribonucleoprotein complex"/>
    <property type="evidence" value="ECO:0007669"/>
    <property type="project" value="UniProtKB-KW"/>
</dbReference>
<dbReference type="GO" id="GO:0005840">
    <property type="term" value="C:ribosome"/>
    <property type="evidence" value="ECO:0007669"/>
    <property type="project" value="UniProtKB-KW"/>
</dbReference>
<dbReference type="GO" id="GO:0003735">
    <property type="term" value="F:structural constituent of ribosome"/>
    <property type="evidence" value="ECO:0007669"/>
    <property type="project" value="InterPro"/>
</dbReference>
<dbReference type="GO" id="GO:0006412">
    <property type="term" value="P:translation"/>
    <property type="evidence" value="ECO:0007669"/>
    <property type="project" value="UniProtKB-UniRule"/>
</dbReference>
<dbReference type="HAMAP" id="MF_00251">
    <property type="entry name" value="Ribosomal_bL36"/>
    <property type="match status" value="1"/>
</dbReference>
<dbReference type="InterPro" id="IPR000473">
    <property type="entry name" value="Ribosomal_bL36"/>
</dbReference>
<dbReference type="InterPro" id="IPR035977">
    <property type="entry name" value="Ribosomal_bL36_sp"/>
</dbReference>
<dbReference type="NCBIfam" id="TIGR01022">
    <property type="entry name" value="rpmJ_bact"/>
    <property type="match status" value="1"/>
</dbReference>
<dbReference type="PANTHER" id="PTHR42888">
    <property type="entry name" value="50S RIBOSOMAL PROTEIN L36, CHLOROPLASTIC"/>
    <property type="match status" value="1"/>
</dbReference>
<dbReference type="PANTHER" id="PTHR42888:SF1">
    <property type="entry name" value="LARGE RIBOSOMAL SUBUNIT PROTEIN BL36C"/>
    <property type="match status" value="1"/>
</dbReference>
<dbReference type="Pfam" id="PF00444">
    <property type="entry name" value="Ribosomal_L36"/>
    <property type="match status" value="1"/>
</dbReference>
<dbReference type="SUPFAM" id="SSF57840">
    <property type="entry name" value="Ribosomal protein L36"/>
    <property type="match status" value="1"/>
</dbReference>
<dbReference type="PROSITE" id="PS00828">
    <property type="entry name" value="RIBOSOMAL_L36"/>
    <property type="match status" value="1"/>
</dbReference>
<sequence length="38" mass="4364">MKVRASVKKLCRNCKIVKRDGVIRVICSAEPKHKQRQG</sequence>
<evidence type="ECO:0000255" key="1">
    <source>
        <dbReference type="HAMAP-Rule" id="MF_00251"/>
    </source>
</evidence>
<evidence type="ECO:0000305" key="2"/>